<proteinExistence type="evidence at protein level"/>
<comment type="function">
    <text evidence="3 4 5 6 7 8 9 10 11 12">Mitogen-activated protein kinase; part of the MST11-MST7-PMK1 MAP kinase (MAPK) cascade that is essential for appressorium formation, penetration and invasive growth (PubMed:11952120, PubMed:15749760, PubMed:21283781, PubMed:23085322, PubMed:23454094, PubMed:27059015, PubMed:8946911). Central regulator of appressorium development that acts downstream of the cAMP signal (PubMed:23591122, PubMed:8946911). The MST11-MST7-PMK1 MAP kinase cascade transduces signals from the cell surface sensors MDB2 and SHO1 that recognize various surface signals such as surface hydrophobicity, cutin monomers, and rice leaf waxes (PubMed:21283781). Regulates expression of secreted fungal effector proteins implicated of host immune defenses, preventing reactive oxygen species generation and excessive callose deposition at plasmodesmata (PubMed:29567712). Furthermore, controls the hyphal constriction required for fungal growth from one rice cell to the neighboring cell, enabling host tissue colonization and blast disease (PubMed:29567712). Targets downstream of the PMK1-MAPK pathway include transcription factor MST12 and pathogenicity-related genes GAS1 and GAS2, both of which are expressed during appressorium formation, even if regulation of MST12 is not associated with expression of GAS1 or GAS2 (PubMed:11952120, PubMed:12215509, PubMed:23454094).</text>
</comment>
<comment type="catalytic activity">
    <reaction evidence="12">
        <text>L-seryl-[protein] + ATP = O-phospho-L-seryl-[protein] + ADP + H(+)</text>
        <dbReference type="Rhea" id="RHEA:17989"/>
        <dbReference type="Rhea" id="RHEA-COMP:9863"/>
        <dbReference type="Rhea" id="RHEA-COMP:11604"/>
        <dbReference type="ChEBI" id="CHEBI:15378"/>
        <dbReference type="ChEBI" id="CHEBI:29999"/>
        <dbReference type="ChEBI" id="CHEBI:30616"/>
        <dbReference type="ChEBI" id="CHEBI:83421"/>
        <dbReference type="ChEBI" id="CHEBI:456216"/>
        <dbReference type="EC" id="2.7.11.24"/>
    </reaction>
    <physiologicalReaction direction="left-to-right" evidence="12">
        <dbReference type="Rhea" id="RHEA:17990"/>
    </physiologicalReaction>
</comment>
<comment type="catalytic activity">
    <reaction evidence="12">
        <text>L-threonyl-[protein] + ATP = O-phospho-L-threonyl-[protein] + ADP + H(+)</text>
        <dbReference type="Rhea" id="RHEA:46608"/>
        <dbReference type="Rhea" id="RHEA-COMP:11060"/>
        <dbReference type="Rhea" id="RHEA-COMP:11605"/>
        <dbReference type="ChEBI" id="CHEBI:15378"/>
        <dbReference type="ChEBI" id="CHEBI:30013"/>
        <dbReference type="ChEBI" id="CHEBI:30616"/>
        <dbReference type="ChEBI" id="CHEBI:61977"/>
        <dbReference type="ChEBI" id="CHEBI:456216"/>
        <dbReference type="EC" id="2.7.11.24"/>
    </reaction>
    <physiologicalReaction direction="left-to-right" evidence="12">
        <dbReference type="Rhea" id="RHEA:46609"/>
    </physiologicalReaction>
</comment>
<comment type="cofactor">
    <cofactor evidence="2">
        <name>Mg(2+)</name>
        <dbReference type="ChEBI" id="CHEBI:18420"/>
    </cofactor>
</comment>
<comment type="PTM">
    <text evidence="5">Phosphorylated by MST7.</text>
</comment>
<comment type="disruption phenotype">
    <text evidence="4 6 8 9 12">Impairs the formation of appressoria and the ability to infect rice plants, even when inoculated onto wounded leaves (PubMed:23454094, PubMed:23591122, PubMed:8946911). Leads to decreased transcription of the cell surface sensors MSB2 and SHO1 (PubMed:21283781). Blocks the transcription of both virulence genes GAS1 and GAS2 during appressorium formation (PubMed:12215509).</text>
</comment>
<comment type="similarity">
    <text evidence="14">Belongs to the protein kinase superfamily. CMGC Ser/Thr protein kinase family. MAP kinase subfamily.</text>
</comment>
<name>PMK1_PYROR</name>
<reference key="1">
    <citation type="journal article" date="1996" name="Genes Dev.">
        <title>MAP kinase and cAMP signaling regulate infection structure formation and pathogenic growth in the rice blast fungus Magnaporthe grisea.</title>
        <authorList>
            <person name="Xu J.R."/>
            <person name="Hamer J.E."/>
        </authorList>
    </citation>
    <scope>NUCLEOTIDE SEQUENCE [GENOMIC DNA]</scope>
    <scope>FUNCTION</scope>
    <scope>CATALYTIC ACTIVITY</scope>
    <scope>DISRUPTION PHENOTYPE</scope>
    <source>
        <strain>Guyane 11</strain>
    </source>
</reference>
<reference key="2">
    <citation type="journal article" date="2002" name="Mol. Plant Microbe Interact.">
        <title>MST12 regulates infectious growth but not appressorium formation in the rice blast fungus Magnaporthe grisea.</title>
        <authorList>
            <person name="Park G."/>
            <person name="Xue C."/>
            <person name="Zheng L."/>
            <person name="Lam S."/>
            <person name="Xu J.R."/>
        </authorList>
    </citation>
    <scope>FUNCTION</scope>
</reference>
<reference key="3">
    <citation type="journal article" date="2002" name="Plant Cell">
        <title>Two novel fungal virulence genes specifically expressed in appressoria of the rice blast fungus.</title>
        <authorList>
            <person name="Xue C."/>
            <person name="Park G."/>
            <person name="Choi W."/>
            <person name="Zheng L."/>
            <person name="Dean R.A."/>
            <person name="Xu J.R."/>
        </authorList>
    </citation>
    <scope>FUNCTION</scope>
    <scope>DISRUPTION PHENOTYPE</scope>
</reference>
<reference key="4">
    <citation type="journal article" date="2005" name="Plant Cell">
        <title>A mitogen-activated protein kinase cascade regulating infection-related morphogenesis in Magnaporthe grisea.</title>
        <authorList>
            <person name="Zhao X."/>
            <person name="Kim Y."/>
            <person name="Park G."/>
            <person name="Xu J.R."/>
        </authorList>
    </citation>
    <scope>FUNCTION</scope>
    <scope>PHOSPHORYLATION</scope>
</reference>
<reference key="5">
    <citation type="journal article" date="2011" name="PLoS Pathog.">
        <title>Multiple plant surface signals are sensed by different mechanisms in the rice blast fungus for appressorium formation.</title>
        <authorList>
            <person name="Liu W."/>
            <person name="Zhou X."/>
            <person name="Li G."/>
            <person name="Li L."/>
            <person name="Kong L."/>
            <person name="Wang C."/>
            <person name="Zhang H."/>
            <person name="Xu J.R."/>
        </authorList>
    </citation>
    <scope>FUNCTION</scope>
    <scope>DISRUPTION PHENOTYPE</scope>
</reference>
<reference key="6">
    <citation type="journal article" date="2012" name="Curr. Opin. Microbiol.">
        <title>Genetic control of infection-related development in Magnaporthe oryzae.</title>
        <authorList>
            <person name="Li G."/>
            <person name="Zhou X."/>
            <person name="Xu J.R."/>
        </authorList>
    </citation>
    <scope>REVIEW ON FUNCTION</scope>
</reference>
<reference key="7">
    <citation type="journal article" date="2013" name="Fungal Genet. Biol.">
        <title>Differences between appressoria formed by germ tubes and appressorium-like structures developed by hyphal tips in Magnaporthe oryzae.</title>
        <authorList>
            <person name="Kong L.A."/>
            <person name="Li G.T."/>
            <person name="Liu Y."/>
            <person name="Liu M.G."/>
            <person name="Zhang S.J."/>
            <person name="Yang J."/>
            <person name="Zhou X.Y."/>
            <person name="Peng Y.L."/>
            <person name="Xu J.R."/>
        </authorList>
    </citation>
    <scope>FUNCTION</scope>
    <scope>DISRUPTION PHENOTYPE</scope>
</reference>
<reference key="8">
    <citation type="journal article" date="2013" name="Gene Expr. Patterns">
        <title>Complexity of roles and regulation of the PMK1-MAPK pathway in mycelium development, conidiation and appressorium formation in Magnaporthe oryzae.</title>
        <authorList>
            <person name="Jin Q."/>
            <person name="Li C."/>
            <person name="Li Y."/>
            <person name="Shang J."/>
            <person name="Li D."/>
            <person name="Chen B."/>
            <person name="Dong H."/>
        </authorList>
    </citation>
    <scope>FUNCTION</scope>
    <scope>DISRUPTION PHENOTYPE</scope>
</reference>
<reference key="9">
    <citation type="journal article" date="2016" name="Environ. Microbiol.">
        <title>Thioredoxins are involved in the activation of the PMK1 MAP kinase pathway during appressorium penetration and invasive growth in Magnaporthe oryzae.</title>
        <authorList>
            <person name="Zhang S."/>
            <person name="Jiang C."/>
            <person name="Zhang Q."/>
            <person name="Qi L."/>
            <person name="Li C."/>
            <person name="Xu J.R."/>
        </authorList>
    </citation>
    <scope>FUNCTION</scope>
</reference>
<reference key="10">
    <citation type="journal article" date="2018" name="Science">
        <title>A single fungal MAP kinase controls plant cell-to-cell invasion by the rice blast fungus.</title>
        <authorList>
            <person name="Sakulkoo W."/>
            <person name="Oses-Ruiz M."/>
            <person name="Oliveira Garcia E."/>
            <person name="Soanes D.M."/>
            <person name="Littlejohn G.R."/>
            <person name="Hacker C."/>
            <person name="Correia A."/>
            <person name="Valent B."/>
            <person name="Talbot N.J."/>
        </authorList>
    </citation>
    <scope>FUNCTION</scope>
    <scope>DISRUPTION PHENOTYPE</scope>
</reference>
<dbReference type="EC" id="2.7.11.24" evidence="12"/>
<dbReference type="EMBL" id="U70134">
    <property type="protein sequence ID" value="AAC49521.2"/>
    <property type="molecule type" value="Genomic_DNA"/>
</dbReference>
<dbReference type="PIR" id="T51944">
    <property type="entry name" value="T51944"/>
</dbReference>
<dbReference type="SMR" id="Q92246"/>
<dbReference type="PHI-base" id="PHI:56"/>
<dbReference type="PHI-base" id="PHI:690"/>
<dbReference type="GO" id="GO:0005524">
    <property type="term" value="F:ATP binding"/>
    <property type="evidence" value="ECO:0007669"/>
    <property type="project" value="UniProtKB-KW"/>
</dbReference>
<dbReference type="GO" id="GO:0004707">
    <property type="term" value="F:MAP kinase activity"/>
    <property type="evidence" value="ECO:0000314"/>
    <property type="project" value="GO_Central"/>
</dbReference>
<dbReference type="GO" id="GO:0106310">
    <property type="term" value="F:protein serine kinase activity"/>
    <property type="evidence" value="ECO:0007669"/>
    <property type="project" value="RHEA"/>
</dbReference>
<dbReference type="GO" id="GO:0000165">
    <property type="term" value="P:MAPK cascade"/>
    <property type="evidence" value="ECO:0000314"/>
    <property type="project" value="GO_Central"/>
</dbReference>
<dbReference type="GO" id="GO:0075018">
    <property type="term" value="P:positive regulation of appressorium formation"/>
    <property type="evidence" value="ECO:0000315"/>
    <property type="project" value="GO_Central"/>
</dbReference>
<dbReference type="CDD" id="cd07849">
    <property type="entry name" value="STKc_ERK1_2_like"/>
    <property type="match status" value="1"/>
</dbReference>
<dbReference type="FunFam" id="1.10.510.10:FF:000040">
    <property type="entry name" value="Mitogen-activated protein kinase"/>
    <property type="match status" value="1"/>
</dbReference>
<dbReference type="FunFam" id="3.30.200.20:FF:000073">
    <property type="entry name" value="Mitogen-activated protein kinase"/>
    <property type="match status" value="1"/>
</dbReference>
<dbReference type="Gene3D" id="3.30.200.20">
    <property type="entry name" value="Phosphorylase Kinase, domain 1"/>
    <property type="match status" value="1"/>
</dbReference>
<dbReference type="Gene3D" id="1.10.510.10">
    <property type="entry name" value="Transferase(Phosphotransferase) domain 1"/>
    <property type="match status" value="1"/>
</dbReference>
<dbReference type="InterPro" id="IPR011009">
    <property type="entry name" value="Kinase-like_dom_sf"/>
</dbReference>
<dbReference type="InterPro" id="IPR050117">
    <property type="entry name" value="MAP_kinase"/>
</dbReference>
<dbReference type="InterPro" id="IPR003527">
    <property type="entry name" value="MAP_kinase_CS"/>
</dbReference>
<dbReference type="InterPro" id="IPR000719">
    <property type="entry name" value="Prot_kinase_dom"/>
</dbReference>
<dbReference type="InterPro" id="IPR017441">
    <property type="entry name" value="Protein_kinase_ATP_BS"/>
</dbReference>
<dbReference type="InterPro" id="IPR008271">
    <property type="entry name" value="Ser/Thr_kinase_AS"/>
</dbReference>
<dbReference type="PANTHER" id="PTHR24055">
    <property type="entry name" value="MITOGEN-ACTIVATED PROTEIN KINASE"/>
    <property type="match status" value="1"/>
</dbReference>
<dbReference type="Pfam" id="PF00069">
    <property type="entry name" value="Pkinase"/>
    <property type="match status" value="1"/>
</dbReference>
<dbReference type="SMART" id="SM00220">
    <property type="entry name" value="S_TKc"/>
    <property type="match status" value="1"/>
</dbReference>
<dbReference type="SUPFAM" id="SSF56112">
    <property type="entry name" value="Protein kinase-like (PK-like)"/>
    <property type="match status" value="1"/>
</dbReference>
<dbReference type="PROSITE" id="PS01351">
    <property type="entry name" value="MAPK"/>
    <property type="match status" value="1"/>
</dbReference>
<dbReference type="PROSITE" id="PS00107">
    <property type="entry name" value="PROTEIN_KINASE_ATP"/>
    <property type="match status" value="1"/>
</dbReference>
<dbReference type="PROSITE" id="PS50011">
    <property type="entry name" value="PROTEIN_KINASE_DOM"/>
    <property type="match status" value="1"/>
</dbReference>
<dbReference type="PROSITE" id="PS00108">
    <property type="entry name" value="PROTEIN_KINASE_ST"/>
    <property type="match status" value="1"/>
</dbReference>
<organism>
    <name type="scientific">Pyricularia oryzae</name>
    <name type="common">Rice blast fungus</name>
    <name type="synonym">Magnaporthe oryzae</name>
    <dbReference type="NCBI Taxonomy" id="318829"/>
    <lineage>
        <taxon>Eukaryota</taxon>
        <taxon>Fungi</taxon>
        <taxon>Dikarya</taxon>
        <taxon>Ascomycota</taxon>
        <taxon>Pezizomycotina</taxon>
        <taxon>Sordariomycetes</taxon>
        <taxon>Sordariomycetidae</taxon>
        <taxon>Magnaporthales</taxon>
        <taxon>Pyriculariaceae</taxon>
        <taxon>Pyricularia</taxon>
    </lineage>
</organism>
<keyword id="KW-0067">ATP-binding</keyword>
<keyword id="KW-0418">Kinase</keyword>
<keyword id="KW-0460">Magnesium</keyword>
<keyword id="KW-0547">Nucleotide-binding</keyword>
<keyword id="KW-0723">Serine/threonine-protein kinase</keyword>
<keyword id="KW-0808">Transferase</keyword>
<keyword id="KW-0843">Virulence</keyword>
<accession>Q92246</accession>
<evidence type="ECO:0000255" key="1">
    <source>
        <dbReference type="PROSITE-ProRule" id="PRU00159"/>
    </source>
</evidence>
<evidence type="ECO:0000255" key="2">
    <source>
        <dbReference type="RuleBase" id="RU361165"/>
    </source>
</evidence>
<evidence type="ECO:0000269" key="3">
    <source>
    </source>
</evidence>
<evidence type="ECO:0000269" key="4">
    <source>
    </source>
</evidence>
<evidence type="ECO:0000269" key="5">
    <source>
    </source>
</evidence>
<evidence type="ECO:0000269" key="6">
    <source>
    </source>
</evidence>
<evidence type="ECO:0000269" key="7">
    <source>
    </source>
</evidence>
<evidence type="ECO:0000269" key="8">
    <source>
    </source>
</evidence>
<evidence type="ECO:0000269" key="9">
    <source>
    </source>
</evidence>
<evidence type="ECO:0000269" key="10">
    <source>
    </source>
</evidence>
<evidence type="ECO:0000269" key="11">
    <source>
    </source>
</evidence>
<evidence type="ECO:0000269" key="12">
    <source>
    </source>
</evidence>
<evidence type="ECO:0000303" key="13">
    <source>
    </source>
</evidence>
<evidence type="ECO:0000305" key="14"/>
<sequence>MSRANPPSNSSGSRKISFNVSEQYDIQDVVGEGAYGVVCSAIHKPSGQKVAIKKITPFDHSMFCLRTLREMKLLRYFNHENIISILDIQKPRSYETFNEVYLIQELMETDMHRVIRTQDLSDDHCQYFIYQTLRALKAMHSANVLHRDLKPSNLLLNANCDLKVCDFGLARSAASQENNSGFMTEYVATRWYRAPEIMLTFKEYTKAIDVWSVGCILAEMLSGKPLFPGKDYHHQLTLILDVLGTPTMEDYYGIKSRRAREYIRSLPFKKKVPFRTLFPKTSDLALDLLEKLLAFNPVKRITVEEALKHPYLEPYHDPDDEPTAPPIPEEFFDFDKHKDNLSKEQLKQFIYQEIMR</sequence>
<gene>
    <name evidence="13" type="primary">PMK1</name>
</gene>
<protein>
    <recommendedName>
        <fullName evidence="13">Mitogen-activated protein kinase PMK1</fullName>
        <shortName evidence="13">MAPK PMK1</shortName>
        <ecNumber evidence="12">2.7.11.24</ecNumber>
    </recommendedName>
</protein>
<feature type="chain" id="PRO_0000453092" description="Mitogen-activated protein kinase PMK1">
    <location>
        <begin position="1"/>
        <end position="356"/>
    </location>
</feature>
<feature type="domain" description="Protein kinase" evidence="1">
    <location>
        <begin position="24"/>
        <end position="312"/>
    </location>
</feature>
<feature type="binding site" evidence="1">
    <location>
        <begin position="30"/>
        <end position="38"/>
    </location>
    <ligand>
        <name>ATP</name>
        <dbReference type="ChEBI" id="CHEBI:30616"/>
    </ligand>
</feature>
<feature type="binding site" evidence="1">
    <location>
        <position position="53"/>
    </location>
    <ligand>
        <name>ATP</name>
        <dbReference type="ChEBI" id="CHEBI:30616"/>
    </ligand>
</feature>